<feature type="chain" id="PRO_1000127546" description="D-aminoacyl-tRNA deacylase">
    <location>
        <begin position="1"/>
        <end position="148"/>
    </location>
</feature>
<feature type="short sequence motif" description="Gly-cisPro motif, important for rejection of L-amino acids" evidence="1">
    <location>
        <begin position="137"/>
        <end position="138"/>
    </location>
</feature>
<comment type="function">
    <text evidence="1">An aminoacyl-tRNA editing enzyme that deacylates mischarged D-aminoacyl-tRNAs. Also deacylates mischarged glycyl-tRNA(Ala), protecting cells against glycine mischarging by AlaRS. Acts via tRNA-based rather than protein-based catalysis; rejects L-amino acids rather than detecting D-amino acids in the active site. By recycling D-aminoacyl-tRNA to D-amino acids and free tRNA molecules, this enzyme counteracts the toxicity associated with the formation of D-aminoacyl-tRNA entities in vivo and helps enforce protein L-homochirality.</text>
</comment>
<comment type="catalytic activity">
    <reaction evidence="1">
        <text>glycyl-tRNA(Ala) + H2O = tRNA(Ala) + glycine + H(+)</text>
        <dbReference type="Rhea" id="RHEA:53744"/>
        <dbReference type="Rhea" id="RHEA-COMP:9657"/>
        <dbReference type="Rhea" id="RHEA-COMP:13640"/>
        <dbReference type="ChEBI" id="CHEBI:15377"/>
        <dbReference type="ChEBI" id="CHEBI:15378"/>
        <dbReference type="ChEBI" id="CHEBI:57305"/>
        <dbReference type="ChEBI" id="CHEBI:78442"/>
        <dbReference type="ChEBI" id="CHEBI:78522"/>
        <dbReference type="EC" id="3.1.1.96"/>
    </reaction>
</comment>
<comment type="catalytic activity">
    <reaction evidence="1">
        <text>a D-aminoacyl-tRNA + H2O = a tRNA + a D-alpha-amino acid + H(+)</text>
        <dbReference type="Rhea" id="RHEA:13953"/>
        <dbReference type="Rhea" id="RHEA-COMP:10123"/>
        <dbReference type="Rhea" id="RHEA-COMP:10124"/>
        <dbReference type="ChEBI" id="CHEBI:15377"/>
        <dbReference type="ChEBI" id="CHEBI:15378"/>
        <dbReference type="ChEBI" id="CHEBI:59871"/>
        <dbReference type="ChEBI" id="CHEBI:78442"/>
        <dbReference type="ChEBI" id="CHEBI:79333"/>
        <dbReference type="EC" id="3.1.1.96"/>
    </reaction>
</comment>
<comment type="subunit">
    <text evidence="1">Homodimer.</text>
</comment>
<comment type="subcellular location">
    <subcellularLocation>
        <location evidence="1">Cytoplasm</location>
    </subcellularLocation>
</comment>
<comment type="domain">
    <text evidence="1">A Gly-cisPro motif from one monomer fits into the active site of the other monomer to allow specific chiral rejection of L-amino acids.</text>
</comment>
<comment type="similarity">
    <text evidence="1">Belongs to the DTD family.</text>
</comment>
<reference key="1">
    <citation type="submission" date="2008-06" db="EMBL/GenBank/DDBJ databases">
        <title>Lactobacillus casei BL23 complete genome sequence.</title>
        <authorList>
            <person name="Maze A."/>
            <person name="Boel G."/>
            <person name="Bourand A."/>
            <person name="Loux V."/>
            <person name="Gibrat J.F."/>
            <person name="Zuniga M."/>
            <person name="Hartke A."/>
            <person name="Deutscher J."/>
        </authorList>
    </citation>
    <scope>NUCLEOTIDE SEQUENCE [LARGE SCALE GENOMIC DNA]</scope>
    <source>
        <strain>BL23</strain>
    </source>
</reference>
<dbReference type="EC" id="3.1.1.96" evidence="1"/>
<dbReference type="EMBL" id="FM177140">
    <property type="protein sequence ID" value="CAQ66834.1"/>
    <property type="molecule type" value="Genomic_DNA"/>
</dbReference>
<dbReference type="SMR" id="B3WEN3"/>
<dbReference type="KEGG" id="lcb:LCABL_17530"/>
<dbReference type="HOGENOM" id="CLU_076901_1_0_9"/>
<dbReference type="GO" id="GO:0005737">
    <property type="term" value="C:cytoplasm"/>
    <property type="evidence" value="ECO:0007669"/>
    <property type="project" value="UniProtKB-SubCell"/>
</dbReference>
<dbReference type="GO" id="GO:0051500">
    <property type="term" value="F:D-tyrosyl-tRNA(Tyr) deacylase activity"/>
    <property type="evidence" value="ECO:0007669"/>
    <property type="project" value="TreeGrafter"/>
</dbReference>
<dbReference type="GO" id="GO:0106026">
    <property type="term" value="F:Gly-tRNA(Ala) deacylase activity"/>
    <property type="evidence" value="ECO:0007669"/>
    <property type="project" value="UniProtKB-UniRule"/>
</dbReference>
<dbReference type="GO" id="GO:0043908">
    <property type="term" value="F:Ser(Gly)-tRNA(Ala) hydrolase activity"/>
    <property type="evidence" value="ECO:0007669"/>
    <property type="project" value="UniProtKB-UniRule"/>
</dbReference>
<dbReference type="GO" id="GO:0000049">
    <property type="term" value="F:tRNA binding"/>
    <property type="evidence" value="ECO:0007669"/>
    <property type="project" value="UniProtKB-UniRule"/>
</dbReference>
<dbReference type="GO" id="GO:0019478">
    <property type="term" value="P:D-amino acid catabolic process"/>
    <property type="evidence" value="ECO:0007669"/>
    <property type="project" value="UniProtKB-UniRule"/>
</dbReference>
<dbReference type="CDD" id="cd00563">
    <property type="entry name" value="Dtyr_deacylase"/>
    <property type="match status" value="1"/>
</dbReference>
<dbReference type="FunFam" id="3.50.80.10:FF:000001">
    <property type="entry name" value="D-aminoacyl-tRNA deacylase"/>
    <property type="match status" value="1"/>
</dbReference>
<dbReference type="Gene3D" id="3.50.80.10">
    <property type="entry name" value="D-tyrosyl-tRNA(Tyr) deacylase"/>
    <property type="match status" value="1"/>
</dbReference>
<dbReference type="HAMAP" id="MF_00518">
    <property type="entry name" value="Deacylase_Dtd"/>
    <property type="match status" value="1"/>
</dbReference>
<dbReference type="InterPro" id="IPR003732">
    <property type="entry name" value="Daa-tRNA_deacyls_DTD"/>
</dbReference>
<dbReference type="InterPro" id="IPR023509">
    <property type="entry name" value="DTD-like_sf"/>
</dbReference>
<dbReference type="NCBIfam" id="TIGR00256">
    <property type="entry name" value="D-aminoacyl-tRNA deacylase"/>
    <property type="match status" value="1"/>
</dbReference>
<dbReference type="PANTHER" id="PTHR10472:SF5">
    <property type="entry name" value="D-AMINOACYL-TRNA DEACYLASE 1"/>
    <property type="match status" value="1"/>
</dbReference>
<dbReference type="PANTHER" id="PTHR10472">
    <property type="entry name" value="D-TYROSYL-TRNA TYR DEACYLASE"/>
    <property type="match status" value="1"/>
</dbReference>
<dbReference type="Pfam" id="PF02580">
    <property type="entry name" value="Tyr_Deacylase"/>
    <property type="match status" value="1"/>
</dbReference>
<dbReference type="SUPFAM" id="SSF69500">
    <property type="entry name" value="DTD-like"/>
    <property type="match status" value="1"/>
</dbReference>
<proteinExistence type="inferred from homology"/>
<evidence type="ECO:0000255" key="1">
    <source>
        <dbReference type="HAMAP-Rule" id="MF_00518"/>
    </source>
</evidence>
<sequence>MRAVVQRSLEAKVTIEGNTVGTIDHGFVVLLGVGPTDTEAESDYLAEKISKLRVFSDPVGKMNLALADVGGQVLSISQFTLYADTHRGNRPSFTGAADPALGDRLYQAFNAKLKALGVPVATGEFGGDMQVSLTNDGPVTILFDTEAK</sequence>
<accession>B3WEN3</accession>
<name>DTD_LACCB</name>
<organism>
    <name type="scientific">Lacticaseibacillus casei (strain BL23)</name>
    <name type="common">Lactobacillus casei</name>
    <dbReference type="NCBI Taxonomy" id="543734"/>
    <lineage>
        <taxon>Bacteria</taxon>
        <taxon>Bacillati</taxon>
        <taxon>Bacillota</taxon>
        <taxon>Bacilli</taxon>
        <taxon>Lactobacillales</taxon>
        <taxon>Lactobacillaceae</taxon>
        <taxon>Lacticaseibacillus</taxon>
    </lineage>
</organism>
<keyword id="KW-0963">Cytoplasm</keyword>
<keyword id="KW-0378">Hydrolase</keyword>
<keyword id="KW-0694">RNA-binding</keyword>
<keyword id="KW-0820">tRNA-binding</keyword>
<gene>
    <name evidence="1" type="primary">dtd</name>
    <name type="ordered locus">LCABL_17530</name>
</gene>
<protein>
    <recommendedName>
        <fullName evidence="1">D-aminoacyl-tRNA deacylase</fullName>
        <shortName evidence="1">DTD</shortName>
        <ecNumber evidence="1">3.1.1.96</ecNumber>
    </recommendedName>
    <alternativeName>
        <fullName evidence="1">Gly-tRNA(Ala) deacylase</fullName>
    </alternativeName>
</protein>